<comment type="subunit">
    <text evidence="1">Part of the 50S ribosomal subunit.</text>
</comment>
<comment type="similarity">
    <text evidence="1">Belongs to the bacterial ribosomal protein bL31 family. Type B subfamily.</text>
</comment>
<comment type="sequence caution" evidence="2">
    <conflict type="erroneous initiation">
        <sequence resource="EMBL-CDS" id="AAP12194"/>
    </conflict>
</comment>
<proteinExistence type="inferred from homology"/>
<protein>
    <recommendedName>
        <fullName evidence="1">Large ribosomal subunit protein bL31B</fullName>
    </recommendedName>
    <alternativeName>
        <fullName evidence="2">50S ribosomal protein L31 type B</fullName>
    </alternativeName>
</protein>
<feature type="chain" id="PRO_0000173196" description="Large ribosomal subunit protein bL31B">
    <location>
        <begin position="1"/>
        <end position="81"/>
    </location>
</feature>
<name>RL31B_BACCR</name>
<sequence length="81" mass="9184">MKAGIHPDYKKVVFMDTNTGFKFLSGSTKGSNETVEWEDGNTYPLLKVEISSDSHPFYTGRQKFATADGRVDRFNKKYGLK</sequence>
<gene>
    <name evidence="1" type="primary">rpmE2</name>
    <name type="ordered locus">BC_5331</name>
</gene>
<evidence type="ECO:0000255" key="1">
    <source>
        <dbReference type="HAMAP-Rule" id="MF_00502"/>
    </source>
</evidence>
<evidence type="ECO:0000305" key="2"/>
<organism>
    <name type="scientific">Bacillus cereus (strain ATCC 14579 / DSM 31 / CCUG 7414 / JCM 2152 / NBRC 15305 / NCIMB 9373 / NCTC 2599 / NRRL B-3711)</name>
    <dbReference type="NCBI Taxonomy" id="226900"/>
    <lineage>
        <taxon>Bacteria</taxon>
        <taxon>Bacillati</taxon>
        <taxon>Bacillota</taxon>
        <taxon>Bacilli</taxon>
        <taxon>Bacillales</taxon>
        <taxon>Bacillaceae</taxon>
        <taxon>Bacillus</taxon>
        <taxon>Bacillus cereus group</taxon>
    </lineage>
</organism>
<keyword id="KW-1185">Reference proteome</keyword>
<keyword id="KW-0687">Ribonucleoprotein</keyword>
<keyword id="KW-0689">Ribosomal protein</keyword>
<dbReference type="EMBL" id="AE016877">
    <property type="protein sequence ID" value="AAP12194.1"/>
    <property type="status" value="ALT_INIT"/>
    <property type="molecule type" value="Genomic_DNA"/>
</dbReference>
<dbReference type="RefSeq" id="NP_834993.2">
    <property type="nucleotide sequence ID" value="NC_004722.1"/>
</dbReference>
<dbReference type="RefSeq" id="WP_000643433.1">
    <property type="nucleotide sequence ID" value="NZ_CP138336.1"/>
</dbReference>
<dbReference type="SMR" id="Q814T9"/>
<dbReference type="STRING" id="226900.BC_5331"/>
<dbReference type="MetOSite" id="Q814T9"/>
<dbReference type="KEGG" id="bce:BC5331"/>
<dbReference type="PATRIC" id="fig|226900.8.peg.5504"/>
<dbReference type="HOGENOM" id="CLU_114306_2_2_9"/>
<dbReference type="OrthoDB" id="9803251at2"/>
<dbReference type="Proteomes" id="UP000001417">
    <property type="component" value="Chromosome"/>
</dbReference>
<dbReference type="GO" id="GO:1990904">
    <property type="term" value="C:ribonucleoprotein complex"/>
    <property type="evidence" value="ECO:0007669"/>
    <property type="project" value="UniProtKB-KW"/>
</dbReference>
<dbReference type="GO" id="GO:0005840">
    <property type="term" value="C:ribosome"/>
    <property type="evidence" value="ECO:0007669"/>
    <property type="project" value="UniProtKB-KW"/>
</dbReference>
<dbReference type="GO" id="GO:0003735">
    <property type="term" value="F:structural constituent of ribosome"/>
    <property type="evidence" value="ECO:0007669"/>
    <property type="project" value="InterPro"/>
</dbReference>
<dbReference type="GO" id="GO:0006412">
    <property type="term" value="P:translation"/>
    <property type="evidence" value="ECO:0007669"/>
    <property type="project" value="UniProtKB-UniRule"/>
</dbReference>
<dbReference type="Gene3D" id="4.10.830.30">
    <property type="entry name" value="Ribosomal protein L31"/>
    <property type="match status" value="1"/>
</dbReference>
<dbReference type="HAMAP" id="MF_00502">
    <property type="entry name" value="Ribosomal_bL31_2"/>
    <property type="match status" value="1"/>
</dbReference>
<dbReference type="InterPro" id="IPR034704">
    <property type="entry name" value="Ribosomal_bL28/bL31-like_sf"/>
</dbReference>
<dbReference type="InterPro" id="IPR002150">
    <property type="entry name" value="Ribosomal_bL31"/>
</dbReference>
<dbReference type="InterPro" id="IPR027493">
    <property type="entry name" value="Ribosomal_bL31_B"/>
</dbReference>
<dbReference type="InterPro" id="IPR042105">
    <property type="entry name" value="Ribosomal_bL31_sf"/>
</dbReference>
<dbReference type="NCBIfam" id="TIGR00105">
    <property type="entry name" value="L31"/>
    <property type="match status" value="1"/>
</dbReference>
<dbReference type="NCBIfam" id="NF002462">
    <property type="entry name" value="PRK01678.1"/>
    <property type="match status" value="1"/>
</dbReference>
<dbReference type="PANTHER" id="PTHR33280">
    <property type="entry name" value="50S RIBOSOMAL PROTEIN L31, CHLOROPLASTIC"/>
    <property type="match status" value="1"/>
</dbReference>
<dbReference type="PANTHER" id="PTHR33280:SF1">
    <property type="entry name" value="LARGE RIBOSOMAL SUBUNIT PROTEIN BL31C"/>
    <property type="match status" value="1"/>
</dbReference>
<dbReference type="Pfam" id="PF01197">
    <property type="entry name" value="Ribosomal_L31"/>
    <property type="match status" value="1"/>
</dbReference>
<dbReference type="PRINTS" id="PR01249">
    <property type="entry name" value="RIBOSOMALL31"/>
</dbReference>
<dbReference type="SUPFAM" id="SSF143800">
    <property type="entry name" value="L28p-like"/>
    <property type="match status" value="1"/>
</dbReference>
<dbReference type="PROSITE" id="PS01143">
    <property type="entry name" value="RIBOSOMAL_L31"/>
    <property type="match status" value="1"/>
</dbReference>
<accession>Q814T9</accession>
<reference key="1">
    <citation type="journal article" date="2003" name="Nature">
        <title>Genome sequence of Bacillus cereus and comparative analysis with Bacillus anthracis.</title>
        <authorList>
            <person name="Ivanova N."/>
            <person name="Sorokin A."/>
            <person name="Anderson I."/>
            <person name="Galleron N."/>
            <person name="Candelon B."/>
            <person name="Kapatral V."/>
            <person name="Bhattacharyya A."/>
            <person name="Reznik G."/>
            <person name="Mikhailova N."/>
            <person name="Lapidus A."/>
            <person name="Chu L."/>
            <person name="Mazur M."/>
            <person name="Goltsman E."/>
            <person name="Larsen N."/>
            <person name="D'Souza M."/>
            <person name="Walunas T."/>
            <person name="Grechkin Y."/>
            <person name="Pusch G."/>
            <person name="Haselkorn R."/>
            <person name="Fonstein M."/>
            <person name="Ehrlich S.D."/>
            <person name="Overbeek R."/>
            <person name="Kyrpides N.C."/>
        </authorList>
    </citation>
    <scope>NUCLEOTIDE SEQUENCE [LARGE SCALE GENOMIC DNA]</scope>
    <source>
        <strain>ATCC 14579 / DSM 31 / CCUG 7414 / JCM 2152 / NBRC 15305 / NCIMB 9373 / NCTC 2599 / NRRL B-3711</strain>
    </source>
</reference>